<keyword id="KW-0961">Cell wall biogenesis/degradation</keyword>
<keyword id="KW-0325">Glycoprotein</keyword>
<keyword id="KW-0328">Glycosyltransferase</keyword>
<keyword id="KW-0333">Golgi apparatus</keyword>
<keyword id="KW-0472">Membrane</keyword>
<keyword id="KW-1185">Reference proteome</keyword>
<keyword id="KW-0735">Signal-anchor</keyword>
<keyword id="KW-0808">Transferase</keyword>
<keyword id="KW-0812">Transmembrane</keyword>
<keyword id="KW-1133">Transmembrane helix</keyword>
<dbReference type="EC" id="2.4.1.-"/>
<dbReference type="EMBL" id="AC007576">
    <property type="protein sequence ID" value="AAD39293.1"/>
    <property type="molecule type" value="Genomic_DNA"/>
</dbReference>
<dbReference type="EMBL" id="AC068197">
    <property type="protein sequence ID" value="AAF79408.1"/>
    <property type="status" value="ALT_SEQ"/>
    <property type="molecule type" value="Genomic_DNA"/>
</dbReference>
<dbReference type="EMBL" id="CP002684">
    <property type="protein sequence ID" value="AEE29105.2"/>
    <property type="molecule type" value="Genomic_DNA"/>
</dbReference>
<dbReference type="EMBL" id="BT002489">
    <property type="protein sequence ID" value="AAO00849.1"/>
    <property type="status" value="ALT_INIT"/>
    <property type="molecule type" value="mRNA"/>
</dbReference>
<dbReference type="EMBL" id="BT008881">
    <property type="protein sequence ID" value="AAP68320.1"/>
    <property type="status" value="ALT_INIT"/>
    <property type="molecule type" value="mRNA"/>
</dbReference>
<dbReference type="PIR" id="B86274">
    <property type="entry name" value="B86274"/>
</dbReference>
<dbReference type="RefSeq" id="NP_172860.2">
    <property type="nucleotide sequence ID" value="NM_101273.3"/>
</dbReference>
<dbReference type="SMR" id="Q9XI80"/>
<dbReference type="STRING" id="3702.Q9XI80"/>
<dbReference type="CAZy" id="GT37">
    <property type="family name" value="Glycosyltransferase Family 37"/>
</dbReference>
<dbReference type="GlyCosmos" id="Q9XI80">
    <property type="glycosylation" value="3 sites, No reported glycans"/>
</dbReference>
<dbReference type="GlyGen" id="Q9XI80">
    <property type="glycosylation" value="4 sites"/>
</dbReference>
<dbReference type="PaxDb" id="3702-AT1G14080.1"/>
<dbReference type="ProteomicsDB" id="230537"/>
<dbReference type="EnsemblPlants" id="AT1G14080.1">
    <property type="protein sequence ID" value="AT1G14080.1"/>
    <property type="gene ID" value="AT1G14080"/>
</dbReference>
<dbReference type="GeneID" id="837968"/>
<dbReference type="Gramene" id="AT1G14080.1">
    <property type="protein sequence ID" value="AT1G14080.1"/>
    <property type="gene ID" value="AT1G14080"/>
</dbReference>
<dbReference type="KEGG" id="ath:AT1G14080"/>
<dbReference type="Araport" id="AT1G14080"/>
<dbReference type="TAIR" id="AT1G14080">
    <property type="gene designation" value="FUT6"/>
</dbReference>
<dbReference type="eggNOG" id="ENOG502SC60">
    <property type="taxonomic scope" value="Eukaryota"/>
</dbReference>
<dbReference type="InParanoid" id="Q9XI80"/>
<dbReference type="OMA" id="DNAGYFQ"/>
<dbReference type="PhylomeDB" id="Q9XI80"/>
<dbReference type="BioCyc" id="ARA:AT1G14080-MONOMER"/>
<dbReference type="UniPathway" id="UPA00378"/>
<dbReference type="PRO" id="PR:Q9XI80"/>
<dbReference type="Proteomes" id="UP000006548">
    <property type="component" value="Chromosome 1"/>
</dbReference>
<dbReference type="ExpressionAtlas" id="Q9XI80">
    <property type="expression patterns" value="baseline and differential"/>
</dbReference>
<dbReference type="GO" id="GO:0032580">
    <property type="term" value="C:Golgi cisterna membrane"/>
    <property type="evidence" value="ECO:0007669"/>
    <property type="project" value="UniProtKB-SubCell"/>
</dbReference>
<dbReference type="GO" id="GO:0008107">
    <property type="term" value="F:galactoside 2-alpha-L-fucosyltransferase activity"/>
    <property type="evidence" value="ECO:0007669"/>
    <property type="project" value="InterPro"/>
</dbReference>
<dbReference type="GO" id="GO:0042546">
    <property type="term" value="P:cell wall biogenesis"/>
    <property type="evidence" value="ECO:0007669"/>
    <property type="project" value="InterPro"/>
</dbReference>
<dbReference type="GO" id="GO:0071555">
    <property type="term" value="P:cell wall organization"/>
    <property type="evidence" value="ECO:0007669"/>
    <property type="project" value="UniProtKB-KW"/>
</dbReference>
<dbReference type="GO" id="GO:0006486">
    <property type="term" value="P:protein glycosylation"/>
    <property type="evidence" value="ECO:0007669"/>
    <property type="project" value="UniProtKB-UniPathway"/>
</dbReference>
<dbReference type="FunFam" id="3.40.50.11340:FF:000005">
    <property type="entry name" value="Galactoside 2-alpha-L-fucosyltransferase"/>
    <property type="match status" value="1"/>
</dbReference>
<dbReference type="Gene3D" id="3.40.50.11340">
    <property type="match status" value="1"/>
</dbReference>
<dbReference type="InterPro" id="IPR004938">
    <property type="entry name" value="XG_FTase"/>
</dbReference>
<dbReference type="PANTHER" id="PTHR31889">
    <property type="entry name" value="FUCOSYLTRANSFERASE 2-RELATED"/>
    <property type="match status" value="1"/>
</dbReference>
<dbReference type="PANTHER" id="PTHR31889:SF49">
    <property type="entry name" value="FUCOSYLTRANSFERASE 6"/>
    <property type="match status" value="1"/>
</dbReference>
<dbReference type="Pfam" id="PF03254">
    <property type="entry name" value="XG_FTase"/>
    <property type="match status" value="1"/>
</dbReference>
<proteinExistence type="evidence at transcript level"/>
<evidence type="ECO:0000250" key="1"/>
<evidence type="ECO:0000255" key="2"/>
<evidence type="ECO:0000269" key="3">
    <source>
    </source>
</evidence>
<evidence type="ECO:0000305" key="4"/>
<accession>Q9XI80</accession>
<accession>F4HUF1</accession>
<accession>Q8GUI5</accession>
<accession>Q9LMF2</accession>
<comment type="function">
    <text>May be involved in cell wall biosynthesis. May act as a fucosyltransferase.</text>
</comment>
<comment type="pathway">
    <text>Protein modification; protein glycosylation.</text>
</comment>
<comment type="subcellular location">
    <subcellularLocation>
        <location evidence="1">Golgi apparatus</location>
        <location evidence="1">Golgi stack membrane</location>
        <topology evidence="1">Single-pass type II membrane protein</topology>
    </subcellularLocation>
    <text evidence="1">Membrane-bound form in trans cisternae of Golgi.</text>
</comment>
<comment type="tissue specificity">
    <text evidence="3">Expressed in roots and flowers.</text>
</comment>
<comment type="similarity">
    <text evidence="4">Belongs to the glycosyltransferase 37 family.</text>
</comment>
<comment type="sequence caution" evidence="4">
    <conflict type="erroneous gene model prediction">
        <sequence resource="EMBL-CDS" id="AAF79408"/>
    </conflict>
</comment>
<comment type="sequence caution" evidence="4">
    <conflict type="erroneous initiation">
        <sequence resource="EMBL-CDS" id="AAO00849"/>
    </conflict>
    <text>Truncated N-terminus.</text>
</comment>
<comment type="sequence caution" evidence="4">
    <conflict type="erroneous initiation">
        <sequence resource="EMBL-CDS" id="AAP68320"/>
    </conflict>
    <text>Truncated N-terminus.</text>
</comment>
<protein>
    <recommendedName>
        <fullName>Fucosyltransferase 6</fullName>
        <shortName>AtFUT6</shortName>
        <ecNumber>2.4.1.-</ecNumber>
    </recommendedName>
</protein>
<name>FUT6_ARATH</name>
<feature type="chain" id="PRO_0000193915" description="Fucosyltransferase 6">
    <location>
        <begin position="1"/>
        <end position="537"/>
    </location>
</feature>
<feature type="topological domain" description="Cytoplasmic" evidence="2">
    <location>
        <begin position="1"/>
        <end position="20"/>
    </location>
</feature>
<feature type="transmembrane region" description="Helical; Signal-anchor for type II membrane protein" evidence="2">
    <location>
        <begin position="21"/>
        <end position="41"/>
    </location>
</feature>
<feature type="topological domain" description="Lumenal" evidence="2">
    <location>
        <begin position="42"/>
        <end position="537"/>
    </location>
</feature>
<feature type="glycosylation site" description="N-linked (GlcNAc...) asparagine" evidence="2">
    <location>
        <position position="54"/>
    </location>
</feature>
<feature type="glycosylation site" description="N-linked (GlcNAc...) asparagine" evidence="2">
    <location>
        <position position="231"/>
    </location>
</feature>
<feature type="glycosylation site" description="N-linked (GlcNAc...) asparagine" evidence="2">
    <location>
        <position position="378"/>
    </location>
</feature>
<sequence>MYHIFQISSEVFRAFGLKMKILLTLVFSGLLIWSVVLVSFSNDFNNQLLVATSNVSRESETPRDRLIGGLLTADFDEGSCLSRYQQSLLYRKASPYKPSEYLVSKLRSYEKLHKRCGPGTDAYKKATEILGHDDENYASKSVGECRYIVWVAVYGLGNRILTLASVFLYALLTERVVLVDQSKDISDLFCEPFPGTSWLLPLEFPLMKQIDGYNKGYSRCYGTMLNNQAINSTLIPPHLYLHILHDSRDNDKMFFCQKDQSLVDKVPWLIVKANVYFVPSLWLNPTFQTELMKLFPQKEAVFHHLARYLFHPTNQVWGLITRSYNAYLSRADETLGIQIRVFSDRAGYFQHVMDQVVACTRRENLLPEPAAQEEPKVNISRSQKLKAVLVTSLYPEYSETLKNMYWERPSSTGEIIEVYQPSGERVQQTDKKLHDQKALAEMYLLSLTDKIVTSARSTFGYVAHSLGGLKPWLLYQPTGPTAPDPPCIQSTSMDPCHLTPPSHGCEPEWGTNSGKVVPFVRHCEDRGNDGLKLFDEL</sequence>
<organism>
    <name type="scientific">Arabidopsis thaliana</name>
    <name type="common">Mouse-ear cress</name>
    <dbReference type="NCBI Taxonomy" id="3702"/>
    <lineage>
        <taxon>Eukaryota</taxon>
        <taxon>Viridiplantae</taxon>
        <taxon>Streptophyta</taxon>
        <taxon>Embryophyta</taxon>
        <taxon>Tracheophyta</taxon>
        <taxon>Spermatophyta</taxon>
        <taxon>Magnoliopsida</taxon>
        <taxon>eudicotyledons</taxon>
        <taxon>Gunneridae</taxon>
        <taxon>Pentapetalae</taxon>
        <taxon>rosids</taxon>
        <taxon>malvids</taxon>
        <taxon>Brassicales</taxon>
        <taxon>Brassicaceae</taxon>
        <taxon>Camelineae</taxon>
        <taxon>Arabidopsis</taxon>
    </lineage>
</organism>
<reference key="1">
    <citation type="journal article" date="2000" name="Nature">
        <title>Sequence and analysis of chromosome 1 of the plant Arabidopsis thaliana.</title>
        <authorList>
            <person name="Theologis A."/>
            <person name="Ecker J.R."/>
            <person name="Palm C.J."/>
            <person name="Federspiel N.A."/>
            <person name="Kaul S."/>
            <person name="White O."/>
            <person name="Alonso J."/>
            <person name="Altafi H."/>
            <person name="Araujo R."/>
            <person name="Bowman C.L."/>
            <person name="Brooks S.Y."/>
            <person name="Buehler E."/>
            <person name="Chan A."/>
            <person name="Chao Q."/>
            <person name="Chen H."/>
            <person name="Cheuk R.F."/>
            <person name="Chin C.W."/>
            <person name="Chung M.K."/>
            <person name="Conn L."/>
            <person name="Conway A.B."/>
            <person name="Conway A.R."/>
            <person name="Creasy T.H."/>
            <person name="Dewar K."/>
            <person name="Dunn P."/>
            <person name="Etgu P."/>
            <person name="Feldblyum T.V."/>
            <person name="Feng J.-D."/>
            <person name="Fong B."/>
            <person name="Fujii C.Y."/>
            <person name="Gill J.E."/>
            <person name="Goldsmith A.D."/>
            <person name="Haas B."/>
            <person name="Hansen N.F."/>
            <person name="Hughes B."/>
            <person name="Huizar L."/>
            <person name="Hunter J.L."/>
            <person name="Jenkins J."/>
            <person name="Johnson-Hopson C."/>
            <person name="Khan S."/>
            <person name="Khaykin E."/>
            <person name="Kim C.J."/>
            <person name="Koo H.L."/>
            <person name="Kremenetskaia I."/>
            <person name="Kurtz D.B."/>
            <person name="Kwan A."/>
            <person name="Lam B."/>
            <person name="Langin-Hooper S."/>
            <person name="Lee A."/>
            <person name="Lee J.M."/>
            <person name="Lenz C.A."/>
            <person name="Li J.H."/>
            <person name="Li Y.-P."/>
            <person name="Lin X."/>
            <person name="Liu S.X."/>
            <person name="Liu Z.A."/>
            <person name="Luros J.S."/>
            <person name="Maiti R."/>
            <person name="Marziali A."/>
            <person name="Militscher J."/>
            <person name="Miranda M."/>
            <person name="Nguyen M."/>
            <person name="Nierman W.C."/>
            <person name="Osborne B.I."/>
            <person name="Pai G."/>
            <person name="Peterson J."/>
            <person name="Pham P.K."/>
            <person name="Rizzo M."/>
            <person name="Rooney T."/>
            <person name="Rowley D."/>
            <person name="Sakano H."/>
            <person name="Salzberg S.L."/>
            <person name="Schwartz J.R."/>
            <person name="Shinn P."/>
            <person name="Southwick A.M."/>
            <person name="Sun H."/>
            <person name="Tallon L.J."/>
            <person name="Tambunga G."/>
            <person name="Toriumi M.J."/>
            <person name="Town C.D."/>
            <person name="Utterback T."/>
            <person name="Van Aken S."/>
            <person name="Vaysberg M."/>
            <person name="Vysotskaia V.S."/>
            <person name="Walker M."/>
            <person name="Wu D."/>
            <person name="Yu G."/>
            <person name="Fraser C.M."/>
            <person name="Venter J.C."/>
            <person name="Davis R.W."/>
        </authorList>
    </citation>
    <scope>NUCLEOTIDE SEQUENCE [LARGE SCALE GENOMIC DNA]</scope>
    <source>
        <strain>cv. Columbia</strain>
    </source>
</reference>
<reference key="2">
    <citation type="journal article" date="2017" name="Plant J.">
        <title>Araport11: a complete reannotation of the Arabidopsis thaliana reference genome.</title>
        <authorList>
            <person name="Cheng C.Y."/>
            <person name="Krishnakumar V."/>
            <person name="Chan A.P."/>
            <person name="Thibaud-Nissen F."/>
            <person name="Schobel S."/>
            <person name="Town C.D."/>
        </authorList>
    </citation>
    <scope>GENOME REANNOTATION</scope>
    <source>
        <strain>cv. Columbia</strain>
    </source>
</reference>
<reference key="3">
    <citation type="journal article" date="2003" name="Science">
        <title>Empirical analysis of transcriptional activity in the Arabidopsis genome.</title>
        <authorList>
            <person name="Yamada K."/>
            <person name="Lim J."/>
            <person name="Dale J.M."/>
            <person name="Chen H."/>
            <person name="Shinn P."/>
            <person name="Palm C.J."/>
            <person name="Southwick A.M."/>
            <person name="Wu H.C."/>
            <person name="Kim C.J."/>
            <person name="Nguyen M."/>
            <person name="Pham P.K."/>
            <person name="Cheuk R.F."/>
            <person name="Karlin-Newmann G."/>
            <person name="Liu S.X."/>
            <person name="Lam B."/>
            <person name="Sakano H."/>
            <person name="Wu T."/>
            <person name="Yu G."/>
            <person name="Miranda M."/>
            <person name="Quach H.L."/>
            <person name="Tripp M."/>
            <person name="Chang C.H."/>
            <person name="Lee J.M."/>
            <person name="Toriumi M.J."/>
            <person name="Chan M.M."/>
            <person name="Tang C.C."/>
            <person name="Onodera C.S."/>
            <person name="Deng J.M."/>
            <person name="Akiyama K."/>
            <person name="Ansari Y."/>
            <person name="Arakawa T."/>
            <person name="Banh J."/>
            <person name="Banno F."/>
            <person name="Bowser L."/>
            <person name="Brooks S.Y."/>
            <person name="Carninci P."/>
            <person name="Chao Q."/>
            <person name="Choy N."/>
            <person name="Enju A."/>
            <person name="Goldsmith A.D."/>
            <person name="Gurjal M."/>
            <person name="Hansen N.F."/>
            <person name="Hayashizaki Y."/>
            <person name="Johnson-Hopson C."/>
            <person name="Hsuan V.W."/>
            <person name="Iida K."/>
            <person name="Karnes M."/>
            <person name="Khan S."/>
            <person name="Koesema E."/>
            <person name="Ishida J."/>
            <person name="Jiang P.X."/>
            <person name="Jones T."/>
            <person name="Kawai J."/>
            <person name="Kamiya A."/>
            <person name="Meyers C."/>
            <person name="Nakajima M."/>
            <person name="Narusaka M."/>
            <person name="Seki M."/>
            <person name="Sakurai T."/>
            <person name="Satou M."/>
            <person name="Tamse R."/>
            <person name="Vaysberg M."/>
            <person name="Wallender E.K."/>
            <person name="Wong C."/>
            <person name="Yamamura Y."/>
            <person name="Yuan S."/>
            <person name="Shinozaki K."/>
            <person name="Davis R.W."/>
            <person name="Theologis A."/>
            <person name="Ecker J.R."/>
        </authorList>
    </citation>
    <scope>NUCLEOTIDE SEQUENCE [LARGE SCALE MRNA] OF 2-537</scope>
    <source>
        <strain>cv. Columbia</strain>
    </source>
</reference>
<reference key="4">
    <citation type="journal article" date="2001" name="Plant Physiol.">
        <title>Characterization of a family of Arabidopsis genes related to xyloglucan fucosyltransferase1.</title>
        <authorList>
            <person name="Sarria R."/>
            <person name="Wagner T.A."/>
            <person name="O'Neill M.A."/>
            <person name="Faik A."/>
            <person name="Wilkerson C.G."/>
            <person name="Keegstra K."/>
            <person name="Raikhel N.V."/>
        </authorList>
    </citation>
    <scope>IDENTIFICATION AS A PUTATIVE FUCOSYLTRANSFERASE</scope>
    <scope>TISSUE SPECIFICITY</scope>
</reference>
<gene>
    <name type="primary">FUT6</name>
    <name type="ordered locus">At1g14080</name>
    <name type="ORF">F16A14.28</name>
    <name type="ORF">F7A19.16</name>
</gene>